<evidence type="ECO:0000255" key="1">
    <source>
        <dbReference type="HAMAP-Rule" id="MF_01187"/>
    </source>
</evidence>
<feature type="chain" id="PRO_0000291099" description="UPF0434 protein HS_0657">
    <location>
        <begin position="1"/>
        <end position="65"/>
    </location>
</feature>
<reference key="1">
    <citation type="journal article" date="2007" name="J. Bacteriol.">
        <title>Complete genome sequence of Haemophilus somnus (Histophilus somni) strain 129Pt and comparison to Haemophilus ducreyi 35000HP and Haemophilus influenzae Rd.</title>
        <authorList>
            <person name="Challacombe J.F."/>
            <person name="Duncan A.J."/>
            <person name="Brettin T.S."/>
            <person name="Bruce D."/>
            <person name="Chertkov O."/>
            <person name="Detter J.C."/>
            <person name="Han C.S."/>
            <person name="Misra M."/>
            <person name="Richardson P."/>
            <person name="Tapia R."/>
            <person name="Thayer N."/>
            <person name="Xie G."/>
            <person name="Inzana T.J."/>
        </authorList>
    </citation>
    <scope>NUCLEOTIDE SEQUENCE [LARGE SCALE GENOMIC DNA]</scope>
    <source>
        <strain>129Pt</strain>
    </source>
</reference>
<protein>
    <recommendedName>
        <fullName evidence="1">UPF0434 protein HS_0657</fullName>
    </recommendedName>
</protein>
<comment type="similarity">
    <text evidence="1">Belongs to the UPF0434 family.</text>
</comment>
<sequence>MNGRLLEIVACPICQGRLKYDSENEQLICHFDHIAYPIKQGIPILLSDQAISLSTSLTNPEQQNQ</sequence>
<organism>
    <name type="scientific">Histophilus somni (strain 129Pt)</name>
    <name type="common">Haemophilus somnus</name>
    <dbReference type="NCBI Taxonomy" id="205914"/>
    <lineage>
        <taxon>Bacteria</taxon>
        <taxon>Pseudomonadati</taxon>
        <taxon>Pseudomonadota</taxon>
        <taxon>Gammaproteobacteria</taxon>
        <taxon>Pasteurellales</taxon>
        <taxon>Pasteurellaceae</taxon>
        <taxon>Histophilus</taxon>
    </lineage>
</organism>
<accession>Q0I2X6</accession>
<name>Y657_HISS1</name>
<proteinExistence type="inferred from homology"/>
<gene>
    <name type="ordered locus">HS_0657</name>
</gene>
<dbReference type="EMBL" id="CP000436">
    <property type="protein sequence ID" value="ABI24934.1"/>
    <property type="molecule type" value="Genomic_DNA"/>
</dbReference>
<dbReference type="SMR" id="Q0I2X6"/>
<dbReference type="KEGG" id="hso:HS_0657"/>
<dbReference type="eggNOG" id="COG2835">
    <property type="taxonomic scope" value="Bacteria"/>
</dbReference>
<dbReference type="HOGENOM" id="CLU_155659_3_1_6"/>
<dbReference type="GO" id="GO:0005829">
    <property type="term" value="C:cytosol"/>
    <property type="evidence" value="ECO:0007669"/>
    <property type="project" value="TreeGrafter"/>
</dbReference>
<dbReference type="FunFam" id="2.20.25.10:FF:000002">
    <property type="entry name" value="UPF0434 protein YcaR"/>
    <property type="match status" value="1"/>
</dbReference>
<dbReference type="Gene3D" id="2.20.25.10">
    <property type="match status" value="1"/>
</dbReference>
<dbReference type="HAMAP" id="MF_01187">
    <property type="entry name" value="UPF0434"/>
    <property type="match status" value="1"/>
</dbReference>
<dbReference type="InterPro" id="IPR005651">
    <property type="entry name" value="Trm112-like"/>
</dbReference>
<dbReference type="PANTHER" id="PTHR33505:SF4">
    <property type="entry name" value="PROTEIN PREY, MITOCHONDRIAL"/>
    <property type="match status" value="1"/>
</dbReference>
<dbReference type="PANTHER" id="PTHR33505">
    <property type="entry name" value="ZGC:162634"/>
    <property type="match status" value="1"/>
</dbReference>
<dbReference type="Pfam" id="PF03966">
    <property type="entry name" value="Trm112p"/>
    <property type="match status" value="1"/>
</dbReference>
<dbReference type="SUPFAM" id="SSF158997">
    <property type="entry name" value="Trm112p-like"/>
    <property type="match status" value="1"/>
</dbReference>